<feature type="signal peptide" evidence="1">
    <location>
        <begin position="1"/>
        <end position="20"/>
    </location>
</feature>
<feature type="chain" id="PRO_0000446719" description="U-scoloptoxin(05)-Er1a" evidence="3">
    <location>
        <begin position="21"/>
        <end position="125"/>
    </location>
</feature>
<keyword id="KW-1015">Disulfide bond</keyword>
<keyword id="KW-0964">Secreted</keyword>
<keyword id="KW-0732">Signal</keyword>
<keyword id="KW-0800">Toxin</keyword>
<sequence>MLSLGVSIFLLVFLIPENSGLECYQCTWMKNSQSPDNCYKNLPNATACAKDMIYCVTDERYEDDEFISIRRFCSSMPMDGRCTEVGKAKDCKYSCEVDACNFSTSIEPSKVFVFSILAMGLVLHT</sequence>
<evidence type="ECO:0000255" key="1"/>
<evidence type="ECO:0000303" key="2">
    <source>
    </source>
</evidence>
<evidence type="ECO:0000305" key="3"/>
<evidence type="ECO:0000305" key="4">
    <source>
    </source>
</evidence>
<protein>
    <recommendedName>
        <fullName evidence="2">U-scoloptoxin(05)-Er1a</fullName>
        <shortName evidence="2">U-SLPTX(05)-Er1a</shortName>
    </recommendedName>
</protein>
<proteinExistence type="evidence at transcript level"/>
<organism>
    <name type="scientific">Ethmostigmus rubripes</name>
    <name type="common">Giant centipede</name>
    <dbReference type="NCBI Taxonomy" id="62613"/>
    <lineage>
        <taxon>Eukaryota</taxon>
        <taxon>Metazoa</taxon>
        <taxon>Ecdysozoa</taxon>
        <taxon>Arthropoda</taxon>
        <taxon>Myriapoda</taxon>
        <taxon>Chilopoda</taxon>
        <taxon>Pleurostigmophora</taxon>
        <taxon>Scolopendromorpha</taxon>
        <taxon>Scolopendridae</taxon>
        <taxon>Ethmostigmus</taxon>
    </lineage>
</organism>
<dbReference type="GO" id="GO:0005576">
    <property type="term" value="C:extracellular region"/>
    <property type="evidence" value="ECO:0007669"/>
    <property type="project" value="UniProtKB-SubCell"/>
</dbReference>
<dbReference type="GO" id="GO:0090729">
    <property type="term" value="F:toxin activity"/>
    <property type="evidence" value="ECO:0007669"/>
    <property type="project" value="UniProtKB-KW"/>
</dbReference>
<dbReference type="CDD" id="cd23590">
    <property type="entry name" value="TFP_LU_ECD_Bou"/>
    <property type="match status" value="1"/>
</dbReference>
<dbReference type="InterPro" id="IPR050975">
    <property type="entry name" value="Sleep_regulator"/>
</dbReference>
<dbReference type="PANTHER" id="PTHR33562">
    <property type="entry name" value="ATILLA, ISOFORM B-RELATED-RELATED"/>
    <property type="match status" value="1"/>
</dbReference>
<name>TX51A_ETHRU</name>
<reference key="1">
    <citation type="journal article" date="2014" name="Mol. Biol. Evol.">
        <title>Clawing through evolution: toxin diversification and convergence in the ancient lineage Chilopoda (centipedes).</title>
        <authorList>
            <person name="Undheim E.A."/>
            <person name="Jones A."/>
            <person name="Clauser K.R."/>
            <person name="Holland J.W."/>
            <person name="Pineda S.S."/>
            <person name="King G.F."/>
            <person name="Fry B.G."/>
        </authorList>
    </citation>
    <scope>NUCLEOTIDE SEQUENCE [MRNA]</scope>
    <scope>NOMENCLATURE</scope>
    <source>
        <tissue>Venom gland</tissue>
    </source>
</reference>
<comment type="subcellular location">
    <subcellularLocation>
        <location evidence="4">Secreted</location>
    </subcellularLocation>
</comment>
<comment type="tissue specificity">
    <text evidence="4">Expressed by the venom gland.</text>
</comment>
<comment type="PTM">
    <text evidence="3">Contains 4 disulfide bonds.</text>
</comment>
<comment type="miscellaneous">
    <text evidence="3">The scoloptoxin-05 family has remarkable similarities with the three-finger toxin family commonly found in snakes.</text>
</comment>
<comment type="similarity">
    <text evidence="3">Belongs to the scoloptoxin-05 family.</text>
</comment>
<comment type="caution">
    <text evidence="4">All E.rubripes family members described in 'Undeheim et al., 2014' have not been imported into UniProtKB. Please, refer to this paper to access them.</text>
</comment>
<comment type="online information" name="National Center for Biotechnology Information (NCBI)">
    <link uri="https://www.ncbi.nlm.nih.gov/nuccore/GASI01000190"/>
</comment>
<accession>P0DPX8</accession>